<comment type="subcellular location">
    <subcellularLocation>
        <location evidence="3">Secreted</location>
    </subcellularLocation>
</comment>
<comment type="developmental stage">
    <text evidence="2">Expressed in pstO cells, becoming more strongly expressed during culmination, and also in cells at the top of the stalk tube.</text>
</comment>
<name>Y7525_DICDI</name>
<proteinExistence type="evidence at transcript level"/>
<accession>Q8T2U0</accession>
<accession>Q554G0</accession>
<reference key="1">
    <citation type="journal article" date="2002" name="Nature">
        <title>Sequence and analysis of chromosome 2 of Dictyostelium discoideum.</title>
        <authorList>
            <person name="Gloeckner G."/>
            <person name="Eichinger L."/>
            <person name="Szafranski K."/>
            <person name="Pachebat J.A."/>
            <person name="Bankier A.T."/>
            <person name="Dear P.H."/>
            <person name="Lehmann R."/>
            <person name="Baumgart C."/>
            <person name="Parra G."/>
            <person name="Abril J.F."/>
            <person name="Guigo R."/>
            <person name="Kumpf K."/>
            <person name="Tunggal B."/>
            <person name="Cox E.C."/>
            <person name="Quail M.A."/>
            <person name="Platzer M."/>
            <person name="Rosenthal A."/>
            <person name="Noegel A.A."/>
        </authorList>
    </citation>
    <scope>NUCLEOTIDE SEQUENCE [LARGE SCALE GENOMIC DNA]</scope>
    <source>
        <strain>AX4</strain>
    </source>
</reference>
<reference key="2">
    <citation type="journal article" date="2005" name="Nature">
        <title>The genome of the social amoeba Dictyostelium discoideum.</title>
        <authorList>
            <person name="Eichinger L."/>
            <person name="Pachebat J.A."/>
            <person name="Gloeckner G."/>
            <person name="Rajandream M.A."/>
            <person name="Sucgang R."/>
            <person name="Berriman M."/>
            <person name="Song J."/>
            <person name="Olsen R."/>
            <person name="Szafranski K."/>
            <person name="Xu Q."/>
            <person name="Tunggal B."/>
            <person name="Kummerfeld S."/>
            <person name="Madera M."/>
            <person name="Konfortov B.A."/>
            <person name="Rivero F."/>
            <person name="Bankier A.T."/>
            <person name="Lehmann R."/>
            <person name="Hamlin N."/>
            <person name="Davies R."/>
            <person name="Gaudet P."/>
            <person name="Fey P."/>
            <person name="Pilcher K."/>
            <person name="Chen G."/>
            <person name="Saunders D."/>
            <person name="Sodergren E.J."/>
            <person name="Davis P."/>
            <person name="Kerhornou A."/>
            <person name="Nie X."/>
            <person name="Hall N."/>
            <person name="Anjard C."/>
            <person name="Hemphill L."/>
            <person name="Bason N."/>
            <person name="Farbrother P."/>
            <person name="Desany B."/>
            <person name="Just E."/>
            <person name="Morio T."/>
            <person name="Rost R."/>
            <person name="Churcher C.M."/>
            <person name="Cooper J."/>
            <person name="Haydock S."/>
            <person name="van Driessche N."/>
            <person name="Cronin A."/>
            <person name="Goodhead I."/>
            <person name="Muzny D.M."/>
            <person name="Mourier T."/>
            <person name="Pain A."/>
            <person name="Lu M."/>
            <person name="Harper D."/>
            <person name="Lindsay R."/>
            <person name="Hauser H."/>
            <person name="James K.D."/>
            <person name="Quiles M."/>
            <person name="Madan Babu M."/>
            <person name="Saito T."/>
            <person name="Buchrieser C."/>
            <person name="Wardroper A."/>
            <person name="Felder M."/>
            <person name="Thangavelu M."/>
            <person name="Johnson D."/>
            <person name="Knights A."/>
            <person name="Loulseged H."/>
            <person name="Mungall K.L."/>
            <person name="Oliver K."/>
            <person name="Price C."/>
            <person name="Quail M.A."/>
            <person name="Urushihara H."/>
            <person name="Hernandez J."/>
            <person name="Rabbinowitsch E."/>
            <person name="Steffen D."/>
            <person name="Sanders M."/>
            <person name="Ma J."/>
            <person name="Kohara Y."/>
            <person name="Sharp S."/>
            <person name="Simmonds M.N."/>
            <person name="Spiegler S."/>
            <person name="Tivey A."/>
            <person name="Sugano S."/>
            <person name="White B."/>
            <person name="Walker D."/>
            <person name="Woodward J.R."/>
            <person name="Winckler T."/>
            <person name="Tanaka Y."/>
            <person name="Shaulsky G."/>
            <person name="Schleicher M."/>
            <person name="Weinstock G.M."/>
            <person name="Rosenthal A."/>
            <person name="Cox E.C."/>
            <person name="Chisholm R.L."/>
            <person name="Gibbs R.A."/>
            <person name="Loomis W.F."/>
            <person name="Platzer M."/>
            <person name="Kay R.R."/>
            <person name="Williams J.G."/>
            <person name="Dear P.H."/>
            <person name="Noegel A.A."/>
            <person name="Barrell B.G."/>
            <person name="Kuspa A."/>
        </authorList>
    </citation>
    <scope>NUCLEOTIDE SEQUENCE [LARGE SCALE GENOMIC DNA]</scope>
    <source>
        <strain>AX4</strain>
    </source>
</reference>
<reference key="3">
    <citation type="journal article" date="2003" name="Eukaryot. Cell">
        <title>Changing patterns of gene expression in Dictyostelium prestalk cell subtypes recognized by in situ hybridization with genes from microarray analyses.</title>
        <authorList>
            <person name="Maeda M."/>
            <person name="Sakamoto H."/>
            <person name="Iranfar N."/>
            <person name="Fuller D."/>
            <person name="Maruo T."/>
            <person name="Ogihara S."/>
            <person name="Morio T."/>
            <person name="Urushihara H."/>
            <person name="Tanaka Y."/>
            <person name="Loomis W.F."/>
        </authorList>
    </citation>
    <scope>DEVELOPMENTAL STAGE [LARGE SCALE ANALYSIS]</scope>
</reference>
<gene>
    <name type="ORF">DDB_G0275255</name>
</gene>
<feature type="signal peptide" evidence="1">
    <location>
        <begin position="1"/>
        <end position="23"/>
    </location>
</feature>
<feature type="chain" id="PRO_0000393118" description="Uncharacterized protein DDB_G0275255">
    <location>
        <begin position="24"/>
        <end position="289"/>
    </location>
</feature>
<feature type="glycosylation site" description="N-linked (GlcNAc...) asparagine" evidence="1">
    <location>
        <position position="74"/>
    </location>
</feature>
<feature type="glycosylation site" description="N-linked (GlcNAc...) asparagine" evidence="1">
    <location>
        <position position="101"/>
    </location>
</feature>
<feature type="glycosylation site" description="N-linked (GlcNAc...) asparagine" evidence="1">
    <location>
        <position position="132"/>
    </location>
</feature>
<feature type="glycosylation site" description="N-linked (GlcNAc...) asparagine" evidence="1">
    <location>
        <position position="285"/>
    </location>
</feature>
<evidence type="ECO:0000255" key="1"/>
<evidence type="ECO:0000269" key="2">
    <source>
    </source>
</evidence>
<evidence type="ECO:0000305" key="3"/>
<dbReference type="EMBL" id="AAFI02000013">
    <property type="protein sequence ID" value="EAL69908.1"/>
    <property type="molecule type" value="Genomic_DNA"/>
</dbReference>
<dbReference type="RefSeq" id="XP_643751.1">
    <property type="nucleotide sequence ID" value="XM_638659.1"/>
</dbReference>
<dbReference type="FunCoup" id="Q8T2U0">
    <property type="interactions" value="372"/>
</dbReference>
<dbReference type="GlyGen" id="Q8T2U0">
    <property type="glycosylation" value="4 sites"/>
</dbReference>
<dbReference type="PaxDb" id="44689-DDB0229928"/>
<dbReference type="EnsemblProtists" id="EAL69908">
    <property type="protein sequence ID" value="EAL69908"/>
    <property type="gene ID" value="DDB_G0275255"/>
</dbReference>
<dbReference type="GeneID" id="8619795"/>
<dbReference type="KEGG" id="ddi:DDB_G0275255"/>
<dbReference type="dictyBase" id="DDB_G0275255"/>
<dbReference type="VEuPathDB" id="AmoebaDB:DDB_G0275255"/>
<dbReference type="eggNOG" id="ENOG502RDA3">
    <property type="taxonomic scope" value="Eukaryota"/>
</dbReference>
<dbReference type="HOGENOM" id="CLU_907401_0_0_1"/>
<dbReference type="InParanoid" id="Q8T2U0"/>
<dbReference type="OMA" id="IRYSRIN"/>
<dbReference type="PhylomeDB" id="Q8T2U0"/>
<dbReference type="PRO" id="PR:Q8T2U0"/>
<dbReference type="Proteomes" id="UP000002195">
    <property type="component" value="Chromosome 2"/>
</dbReference>
<dbReference type="GO" id="GO:0005576">
    <property type="term" value="C:extracellular region"/>
    <property type="evidence" value="ECO:0007669"/>
    <property type="project" value="UniProtKB-SubCell"/>
</dbReference>
<dbReference type="InterPro" id="IPR040405">
    <property type="entry name" value="DDB_G0275255-like"/>
</dbReference>
<dbReference type="PANTHER" id="PTHR34411:SF5">
    <property type="entry name" value="DUF6748 DOMAIN-CONTAINING PROTEIN"/>
    <property type="match status" value="1"/>
</dbReference>
<dbReference type="PANTHER" id="PTHR34411">
    <property type="entry name" value="DUF6748 DOMAIN-CONTAINING PROTEIN-RELATED"/>
    <property type="match status" value="1"/>
</dbReference>
<keyword id="KW-0325">Glycoprotein</keyword>
<keyword id="KW-1185">Reference proteome</keyword>
<keyword id="KW-0964">Secreted</keyword>
<keyword id="KW-0732">Signal</keyword>
<organism>
    <name type="scientific">Dictyostelium discoideum</name>
    <name type="common">Social amoeba</name>
    <dbReference type="NCBI Taxonomy" id="44689"/>
    <lineage>
        <taxon>Eukaryota</taxon>
        <taxon>Amoebozoa</taxon>
        <taxon>Evosea</taxon>
        <taxon>Eumycetozoa</taxon>
        <taxon>Dictyostelia</taxon>
        <taxon>Dictyosteliales</taxon>
        <taxon>Dictyosteliaceae</taxon>
        <taxon>Dictyostelium</taxon>
    </lineage>
</organism>
<sequence length="289" mass="32514">MIKNYKLLLFTTFTLFFITFVSGSSILKANFYYKVDWENVQCFVPPCPKYTIQKLNTNEKSQKILDFIFPNGLNKTTLLGDESKTLIVLGTTQPSSKFPNNATDFLVTRVYKSLPLGNKQTSTDKYYMFGDNGTRCKTSPCPNIVAALLNVHSQEIINTISQPYEKNVGFLDSVWLSSKNIRSDDFGLIGQGTIKNGVISISNSFIYLPDPPIKCPELPLLKCVEGNSMTYSRDENRCLVSPRCTKFGVCTLSIPLCNKGYRLVSFPSTELNGCPKFFCDPEFVNKTHK</sequence>
<protein>
    <recommendedName>
        <fullName>Uncharacterized protein DDB_G0275255</fullName>
    </recommendedName>
</protein>